<accession>A9M0D3</accession>
<sequence length="88" mass="10180">MARMVFCVKLNKEAEGMKFPPLPNELGKRIFENVSQEAWAAWTRHQTMLINENRLSLADPRAREYLAQQMEQYFFGDGADAVQGYVPQ</sequence>
<name>FETP_NEIM0</name>
<dbReference type="EMBL" id="CP000381">
    <property type="protein sequence ID" value="ABX72394.1"/>
    <property type="molecule type" value="Genomic_DNA"/>
</dbReference>
<dbReference type="RefSeq" id="WP_002214948.1">
    <property type="nucleotide sequence ID" value="NC_010120.1"/>
</dbReference>
<dbReference type="SMR" id="A9M0D3"/>
<dbReference type="KEGG" id="nmn:NMCC_0178"/>
<dbReference type="HOGENOM" id="CLU_170994_0_0_4"/>
<dbReference type="Proteomes" id="UP000001177">
    <property type="component" value="Chromosome"/>
</dbReference>
<dbReference type="GO" id="GO:0005829">
    <property type="term" value="C:cytosol"/>
    <property type="evidence" value="ECO:0007669"/>
    <property type="project" value="TreeGrafter"/>
</dbReference>
<dbReference type="GO" id="GO:0005506">
    <property type="term" value="F:iron ion binding"/>
    <property type="evidence" value="ECO:0007669"/>
    <property type="project" value="UniProtKB-UniRule"/>
</dbReference>
<dbReference type="GO" id="GO:0034599">
    <property type="term" value="P:cellular response to oxidative stress"/>
    <property type="evidence" value="ECO:0007669"/>
    <property type="project" value="TreeGrafter"/>
</dbReference>
<dbReference type="FunFam" id="1.10.3880.10:FF:000001">
    <property type="entry name" value="Probable Fe(2+)-trafficking protein"/>
    <property type="match status" value="1"/>
</dbReference>
<dbReference type="Gene3D" id="1.10.3880.10">
    <property type="entry name" value="Fe(II) trafficking protein YggX"/>
    <property type="match status" value="1"/>
</dbReference>
<dbReference type="HAMAP" id="MF_00686">
    <property type="entry name" value="Fe_traffic_YggX"/>
    <property type="match status" value="1"/>
</dbReference>
<dbReference type="InterPro" id="IPR007457">
    <property type="entry name" value="Fe_traffick_prot_YggX"/>
</dbReference>
<dbReference type="InterPro" id="IPR036766">
    <property type="entry name" value="Fe_traffick_prot_YggX_sf"/>
</dbReference>
<dbReference type="NCBIfam" id="NF003817">
    <property type="entry name" value="PRK05408.1"/>
    <property type="match status" value="1"/>
</dbReference>
<dbReference type="PANTHER" id="PTHR36965">
    <property type="entry name" value="FE(2+)-TRAFFICKING PROTEIN-RELATED"/>
    <property type="match status" value="1"/>
</dbReference>
<dbReference type="PANTHER" id="PTHR36965:SF1">
    <property type="entry name" value="FE(2+)-TRAFFICKING PROTEIN-RELATED"/>
    <property type="match status" value="1"/>
</dbReference>
<dbReference type="Pfam" id="PF04362">
    <property type="entry name" value="Iron_traffic"/>
    <property type="match status" value="1"/>
</dbReference>
<dbReference type="PIRSF" id="PIRSF029827">
    <property type="entry name" value="Fe_traffic_YggX"/>
    <property type="match status" value="1"/>
</dbReference>
<dbReference type="SUPFAM" id="SSF111148">
    <property type="entry name" value="YggX-like"/>
    <property type="match status" value="1"/>
</dbReference>
<proteinExistence type="inferred from homology"/>
<gene>
    <name type="ordered locus">NMCC_0178</name>
</gene>
<comment type="function">
    <text evidence="1">Could be a mediator in iron transactions between iron acquisition and iron-requiring processes, such as synthesis and/or repair of Fe-S clusters in biosynthetic enzymes.</text>
</comment>
<comment type="similarity">
    <text evidence="1">Belongs to the Fe(2+)-trafficking protein family.</text>
</comment>
<protein>
    <recommendedName>
        <fullName evidence="1">Probable Fe(2+)-trafficking protein</fullName>
    </recommendedName>
</protein>
<reference key="1">
    <citation type="journal article" date="2008" name="Genomics">
        <title>Characterization of ST-4821 complex, a unique Neisseria meningitidis clone.</title>
        <authorList>
            <person name="Peng J."/>
            <person name="Yang L."/>
            <person name="Yang F."/>
            <person name="Yang J."/>
            <person name="Yan Y."/>
            <person name="Nie H."/>
            <person name="Zhang X."/>
            <person name="Xiong Z."/>
            <person name="Jiang Y."/>
            <person name="Cheng F."/>
            <person name="Xu X."/>
            <person name="Chen S."/>
            <person name="Sun L."/>
            <person name="Li W."/>
            <person name="Shen Y."/>
            <person name="Shao Z."/>
            <person name="Liang X."/>
            <person name="Xu J."/>
            <person name="Jin Q."/>
        </authorList>
    </citation>
    <scope>NUCLEOTIDE SEQUENCE [LARGE SCALE GENOMIC DNA]</scope>
    <source>
        <strain>053442</strain>
    </source>
</reference>
<organism>
    <name type="scientific">Neisseria meningitidis serogroup C (strain 053442)</name>
    <dbReference type="NCBI Taxonomy" id="374833"/>
    <lineage>
        <taxon>Bacteria</taxon>
        <taxon>Pseudomonadati</taxon>
        <taxon>Pseudomonadota</taxon>
        <taxon>Betaproteobacteria</taxon>
        <taxon>Neisseriales</taxon>
        <taxon>Neisseriaceae</taxon>
        <taxon>Neisseria</taxon>
    </lineage>
</organism>
<evidence type="ECO:0000255" key="1">
    <source>
        <dbReference type="HAMAP-Rule" id="MF_00686"/>
    </source>
</evidence>
<feature type="chain" id="PRO_1000083079" description="Probable Fe(2+)-trafficking protein">
    <location>
        <begin position="1"/>
        <end position="88"/>
    </location>
</feature>
<keyword id="KW-0408">Iron</keyword>